<dbReference type="EC" id="3.5.4.2" evidence="1"/>
<dbReference type="EMBL" id="CP000112">
    <property type="protein sequence ID" value="ABB36937.1"/>
    <property type="molecule type" value="Genomic_DNA"/>
</dbReference>
<dbReference type="RefSeq" id="WP_011366306.1">
    <property type="nucleotide sequence ID" value="NC_007519.1"/>
</dbReference>
<dbReference type="SMR" id="Q317F9"/>
<dbReference type="STRING" id="207559.Dde_0136"/>
<dbReference type="KEGG" id="dde:Dde_0136"/>
<dbReference type="eggNOG" id="COG1001">
    <property type="taxonomic scope" value="Bacteria"/>
</dbReference>
<dbReference type="HOGENOM" id="CLU_027935_0_0_7"/>
<dbReference type="Proteomes" id="UP000002710">
    <property type="component" value="Chromosome"/>
</dbReference>
<dbReference type="GO" id="GO:0000034">
    <property type="term" value="F:adenine deaminase activity"/>
    <property type="evidence" value="ECO:0007669"/>
    <property type="project" value="UniProtKB-UniRule"/>
</dbReference>
<dbReference type="GO" id="GO:0006146">
    <property type="term" value="P:adenine catabolic process"/>
    <property type="evidence" value="ECO:0007669"/>
    <property type="project" value="InterPro"/>
</dbReference>
<dbReference type="CDD" id="cd01295">
    <property type="entry name" value="AdeC"/>
    <property type="match status" value="1"/>
</dbReference>
<dbReference type="Gene3D" id="3.20.20.140">
    <property type="entry name" value="Metal-dependent hydrolases"/>
    <property type="match status" value="1"/>
</dbReference>
<dbReference type="Gene3D" id="2.30.40.10">
    <property type="entry name" value="Urease, subunit C, domain 1"/>
    <property type="match status" value="1"/>
</dbReference>
<dbReference type="HAMAP" id="MF_01518">
    <property type="entry name" value="Adenine_deamin"/>
    <property type="match status" value="1"/>
</dbReference>
<dbReference type="InterPro" id="IPR006679">
    <property type="entry name" value="Adenine_deam"/>
</dbReference>
<dbReference type="InterPro" id="IPR026912">
    <property type="entry name" value="Adenine_deam_C"/>
</dbReference>
<dbReference type="InterPro" id="IPR006680">
    <property type="entry name" value="Amidohydro-rel"/>
</dbReference>
<dbReference type="InterPro" id="IPR011059">
    <property type="entry name" value="Metal-dep_hydrolase_composite"/>
</dbReference>
<dbReference type="InterPro" id="IPR032466">
    <property type="entry name" value="Metal_Hydrolase"/>
</dbReference>
<dbReference type="NCBIfam" id="TIGR01178">
    <property type="entry name" value="ade"/>
    <property type="match status" value="1"/>
</dbReference>
<dbReference type="PANTHER" id="PTHR11113:SF2">
    <property type="entry name" value="ADENINE DEAMINASE"/>
    <property type="match status" value="1"/>
</dbReference>
<dbReference type="PANTHER" id="PTHR11113">
    <property type="entry name" value="N-ACETYLGLUCOSAMINE-6-PHOSPHATE DEACETYLASE"/>
    <property type="match status" value="1"/>
</dbReference>
<dbReference type="Pfam" id="PF13382">
    <property type="entry name" value="Adenine_deam_C"/>
    <property type="match status" value="1"/>
</dbReference>
<dbReference type="Pfam" id="PF01979">
    <property type="entry name" value="Amidohydro_1"/>
    <property type="match status" value="1"/>
</dbReference>
<dbReference type="SUPFAM" id="SSF51338">
    <property type="entry name" value="Composite domain of metallo-dependent hydrolases"/>
    <property type="match status" value="1"/>
</dbReference>
<dbReference type="SUPFAM" id="SSF51556">
    <property type="entry name" value="Metallo-dependent hydrolases"/>
    <property type="match status" value="1"/>
</dbReference>
<keyword id="KW-0378">Hydrolase</keyword>
<keyword id="KW-0464">Manganese</keyword>
<keyword id="KW-1185">Reference proteome</keyword>
<comment type="catalytic activity">
    <reaction evidence="1">
        <text>adenine + H2O + H(+) = hypoxanthine + NH4(+)</text>
        <dbReference type="Rhea" id="RHEA:23688"/>
        <dbReference type="ChEBI" id="CHEBI:15377"/>
        <dbReference type="ChEBI" id="CHEBI:15378"/>
        <dbReference type="ChEBI" id="CHEBI:16708"/>
        <dbReference type="ChEBI" id="CHEBI:17368"/>
        <dbReference type="ChEBI" id="CHEBI:28938"/>
        <dbReference type="EC" id="3.5.4.2"/>
    </reaction>
</comment>
<comment type="cofactor">
    <cofactor evidence="1">
        <name>Mn(2+)</name>
        <dbReference type="ChEBI" id="CHEBI:29035"/>
    </cofactor>
</comment>
<comment type="similarity">
    <text evidence="1">Belongs to the metallo-dependent hydrolases superfamily. Adenine deaminase family.</text>
</comment>
<gene>
    <name evidence="1" type="primary">ade</name>
    <name type="ordered locus">Dde_0136</name>
</gene>
<proteinExistence type="inferred from homology"/>
<reference key="1">
    <citation type="journal article" date="2011" name="J. Bacteriol.">
        <title>Complete genome sequence and updated annotation of Desulfovibrio alaskensis G20.</title>
        <authorList>
            <person name="Hauser L.J."/>
            <person name="Land M.L."/>
            <person name="Brown S.D."/>
            <person name="Larimer F."/>
            <person name="Keller K.L."/>
            <person name="Rapp-Giles B.J."/>
            <person name="Price M.N."/>
            <person name="Lin M."/>
            <person name="Bruce D.C."/>
            <person name="Detter J.C."/>
            <person name="Tapia R."/>
            <person name="Han C.S."/>
            <person name="Goodwin L.A."/>
            <person name="Cheng J.F."/>
            <person name="Pitluck S."/>
            <person name="Copeland A."/>
            <person name="Lucas S."/>
            <person name="Nolan M."/>
            <person name="Lapidus A.L."/>
            <person name="Palumbo A.V."/>
            <person name="Wall J.D."/>
        </authorList>
    </citation>
    <scope>NUCLEOTIDE SEQUENCE [LARGE SCALE GENOMIC DNA]</scope>
    <source>
        <strain>ATCC BAA-1058 / DSM 17464 / G20</strain>
    </source>
</reference>
<organism>
    <name type="scientific">Oleidesulfovibrio alaskensis (strain ATCC BAA-1058 / DSM 17464 / G20)</name>
    <name type="common">Desulfovibrio alaskensis</name>
    <dbReference type="NCBI Taxonomy" id="207559"/>
    <lineage>
        <taxon>Bacteria</taxon>
        <taxon>Pseudomonadati</taxon>
        <taxon>Thermodesulfobacteriota</taxon>
        <taxon>Desulfovibrionia</taxon>
        <taxon>Desulfovibrionales</taxon>
        <taxon>Desulfovibrionaceae</taxon>
        <taxon>Oleidesulfovibrio</taxon>
    </lineage>
</organism>
<name>ADEC_OLEA2</name>
<evidence type="ECO:0000255" key="1">
    <source>
        <dbReference type="HAMAP-Rule" id="MF_01518"/>
    </source>
</evidence>
<protein>
    <recommendedName>
        <fullName evidence="1">Adenine deaminase</fullName>
        <shortName evidence="1">Adenase</shortName>
        <shortName evidence="1">Adenine aminase</shortName>
        <ecNumber evidence="1">3.5.4.2</ecNumber>
    </recommendedName>
</protein>
<accession>Q317F9</accession>
<feature type="chain" id="PRO_0000292381" description="Adenine deaminase">
    <location>
        <begin position="1"/>
        <end position="570"/>
    </location>
</feature>
<sequence length="570" mass="60480">MKNNTMNTLIGAAQDESPVDLLVRNVRLVNVLSGEIHDAHIAVKDGIVVGFEEYEALHVVEGNGRHCIPGLIDGHIHIESTLLSPARFAAAAAPHGTAAVMCDPHEIANVMGAEGIEYMLHASAGLPLSVYVMMPSCVPATHMETAGATLRAEDVQDFLSRYPDRMPGLAEMMNYPGVLFRDDEVMAKLEAAASHVIDGHAPLLRGKALNAYVLGGPASDHETSDADEAREKLRKGMHLMIREGGSQEHNLEELVTVLNEFNTQNVSFVSDDKVVNDLMESGHMDDILRKAMAAGIPPVRAVQMASINTARYFRLHRRGAVAPGYRADFVLLDDLQTMRISECYLGGRNVKEIDFTGHSAAFSANTVHVAGLNTDSLHVAAGNGNLRVIGIVPGQVITHALELPPTLREGAAVADPSRDLAKLAVFERHKGTGNVGLGFTAGLGLHKGALAGTVSHDSHNLIVAGMDDADMITAAEEVQCIGGGLAVACDGRVLASLPLPIAGLMSDAPVEDVLAGLRGVNEALATLGYKLSSPFAALAFLSLAVIPSLKLTDKGLVDVHKFEIVPLWTA</sequence>